<organism>
    <name type="scientific">Escherichia coli O127:H6 (strain E2348/69 / EPEC)</name>
    <dbReference type="NCBI Taxonomy" id="574521"/>
    <lineage>
        <taxon>Bacteria</taxon>
        <taxon>Pseudomonadati</taxon>
        <taxon>Pseudomonadota</taxon>
        <taxon>Gammaproteobacteria</taxon>
        <taxon>Enterobacterales</taxon>
        <taxon>Enterobacteriaceae</taxon>
        <taxon>Escherichia</taxon>
    </lineage>
</organism>
<feature type="chain" id="PRO_0000375559" description="Succinyl-diaminopimelate desuccinylase">
    <location>
        <begin position="1"/>
        <end position="375"/>
    </location>
</feature>
<feature type="active site" evidence="1">
    <location>
        <position position="68"/>
    </location>
</feature>
<feature type="active site" description="Proton acceptor" evidence="1">
    <location>
        <position position="133"/>
    </location>
</feature>
<feature type="binding site" evidence="1">
    <location>
        <position position="66"/>
    </location>
    <ligand>
        <name>Zn(2+)</name>
        <dbReference type="ChEBI" id="CHEBI:29105"/>
        <label>1</label>
    </ligand>
</feature>
<feature type="binding site" evidence="1">
    <location>
        <position position="99"/>
    </location>
    <ligand>
        <name>Zn(2+)</name>
        <dbReference type="ChEBI" id="CHEBI:29105"/>
        <label>1</label>
    </ligand>
</feature>
<feature type="binding site" evidence="1">
    <location>
        <position position="99"/>
    </location>
    <ligand>
        <name>Zn(2+)</name>
        <dbReference type="ChEBI" id="CHEBI:29105"/>
        <label>2</label>
    </ligand>
</feature>
<feature type="binding site" evidence="1">
    <location>
        <position position="134"/>
    </location>
    <ligand>
        <name>Zn(2+)</name>
        <dbReference type="ChEBI" id="CHEBI:29105"/>
        <label>2</label>
    </ligand>
</feature>
<feature type="binding site" evidence="1">
    <location>
        <position position="162"/>
    </location>
    <ligand>
        <name>Zn(2+)</name>
        <dbReference type="ChEBI" id="CHEBI:29105"/>
        <label>1</label>
    </ligand>
</feature>
<feature type="binding site" evidence="1">
    <location>
        <position position="348"/>
    </location>
    <ligand>
        <name>Zn(2+)</name>
        <dbReference type="ChEBI" id="CHEBI:29105"/>
        <label>2</label>
    </ligand>
</feature>
<accession>B7UGM1</accession>
<reference key="1">
    <citation type="journal article" date="2009" name="J. Bacteriol.">
        <title>Complete genome sequence and comparative genome analysis of enteropathogenic Escherichia coli O127:H6 strain E2348/69.</title>
        <authorList>
            <person name="Iguchi A."/>
            <person name="Thomson N.R."/>
            <person name="Ogura Y."/>
            <person name="Saunders D."/>
            <person name="Ooka T."/>
            <person name="Henderson I.R."/>
            <person name="Harris D."/>
            <person name="Asadulghani M."/>
            <person name="Kurokawa K."/>
            <person name="Dean P."/>
            <person name="Kenny B."/>
            <person name="Quail M.A."/>
            <person name="Thurston S."/>
            <person name="Dougan G."/>
            <person name="Hayashi T."/>
            <person name="Parkhill J."/>
            <person name="Frankel G."/>
        </authorList>
    </citation>
    <scope>NUCLEOTIDE SEQUENCE [LARGE SCALE GENOMIC DNA]</scope>
    <source>
        <strain>E2348/69 / EPEC</strain>
    </source>
</reference>
<sequence>MSCPVIELTQQLIRRPSLSPDDAGCQALLIERLQAIGFTVERMDFADTQNFWAWRGQGETLAFAGHTDVVPPGDADRWINPPFEPTIRDGMLFGRGAADMKGSLAAMVVAAERFVAQHPNHTGRLAFLITSDEEASAHNGTVKVVEALMARNERLDYCLVGEPSSIEVVGDVVKNGRRGSLTCNLTIHGVQGHVAYPHLADNPVHRAAPFLNELVAIEWDQGNEFFPATSMQIANIQAGTGSNNVIPGELFVQFNFRFSTELTDEMIKAQVLALLEKHQLRYTVDWWLSGQPFLTARGKLVDAVVNAVEHYNEIKPQLLTTGGTSDGRFIARMGAQVVELGPVNATIHKINECVNAADLQLLARMYQRIMEQLVA</sequence>
<evidence type="ECO:0000255" key="1">
    <source>
        <dbReference type="HAMAP-Rule" id="MF_01690"/>
    </source>
</evidence>
<name>DAPE_ECO27</name>
<keyword id="KW-0028">Amino-acid biosynthesis</keyword>
<keyword id="KW-0170">Cobalt</keyword>
<keyword id="KW-0220">Diaminopimelate biosynthesis</keyword>
<keyword id="KW-0378">Hydrolase</keyword>
<keyword id="KW-0457">Lysine biosynthesis</keyword>
<keyword id="KW-0479">Metal-binding</keyword>
<keyword id="KW-1185">Reference proteome</keyword>
<keyword id="KW-0862">Zinc</keyword>
<proteinExistence type="inferred from homology"/>
<gene>
    <name evidence="1" type="primary">dapE</name>
    <name type="ordered locus">E2348C_2708</name>
</gene>
<dbReference type="EC" id="3.5.1.18" evidence="1"/>
<dbReference type="EMBL" id="FM180568">
    <property type="protein sequence ID" value="CAS10256.1"/>
    <property type="molecule type" value="Genomic_DNA"/>
</dbReference>
<dbReference type="RefSeq" id="WP_001277801.1">
    <property type="nucleotide sequence ID" value="NC_011601.1"/>
</dbReference>
<dbReference type="SMR" id="B7UGM1"/>
<dbReference type="MEROPS" id="M20.010"/>
<dbReference type="KEGG" id="ecg:E2348C_2708"/>
<dbReference type="HOGENOM" id="CLU_021802_4_0_6"/>
<dbReference type="UniPathway" id="UPA00034">
    <property type="reaction ID" value="UER00021"/>
</dbReference>
<dbReference type="Proteomes" id="UP000008205">
    <property type="component" value="Chromosome"/>
</dbReference>
<dbReference type="GO" id="GO:0008777">
    <property type="term" value="F:acetylornithine deacetylase activity"/>
    <property type="evidence" value="ECO:0007669"/>
    <property type="project" value="TreeGrafter"/>
</dbReference>
<dbReference type="GO" id="GO:0050897">
    <property type="term" value="F:cobalt ion binding"/>
    <property type="evidence" value="ECO:0007669"/>
    <property type="project" value="UniProtKB-UniRule"/>
</dbReference>
<dbReference type="GO" id="GO:0009014">
    <property type="term" value="F:succinyl-diaminopimelate desuccinylase activity"/>
    <property type="evidence" value="ECO:0007669"/>
    <property type="project" value="UniProtKB-UniRule"/>
</dbReference>
<dbReference type="GO" id="GO:0008270">
    <property type="term" value="F:zinc ion binding"/>
    <property type="evidence" value="ECO:0007669"/>
    <property type="project" value="UniProtKB-UniRule"/>
</dbReference>
<dbReference type="GO" id="GO:0019877">
    <property type="term" value="P:diaminopimelate biosynthetic process"/>
    <property type="evidence" value="ECO:0007669"/>
    <property type="project" value="UniProtKB-UniRule"/>
</dbReference>
<dbReference type="GO" id="GO:0006526">
    <property type="term" value="P:L-arginine biosynthetic process"/>
    <property type="evidence" value="ECO:0007669"/>
    <property type="project" value="TreeGrafter"/>
</dbReference>
<dbReference type="GO" id="GO:0009089">
    <property type="term" value="P:lysine biosynthetic process via diaminopimelate"/>
    <property type="evidence" value="ECO:0007669"/>
    <property type="project" value="UniProtKB-UniRule"/>
</dbReference>
<dbReference type="CDD" id="cd03891">
    <property type="entry name" value="M20_DapE_proteobac"/>
    <property type="match status" value="1"/>
</dbReference>
<dbReference type="FunFam" id="3.30.70.360:FF:000011">
    <property type="entry name" value="Succinyl-diaminopimelate desuccinylase"/>
    <property type="match status" value="1"/>
</dbReference>
<dbReference type="FunFam" id="3.40.630.10:FF:000005">
    <property type="entry name" value="Succinyl-diaminopimelate desuccinylase"/>
    <property type="match status" value="1"/>
</dbReference>
<dbReference type="FunFam" id="3.40.630.10:FF:000010">
    <property type="entry name" value="Succinyl-diaminopimelate desuccinylase"/>
    <property type="match status" value="1"/>
</dbReference>
<dbReference type="Gene3D" id="3.40.630.10">
    <property type="entry name" value="Zn peptidases"/>
    <property type="match status" value="2"/>
</dbReference>
<dbReference type="HAMAP" id="MF_01690">
    <property type="entry name" value="DapE"/>
    <property type="match status" value="1"/>
</dbReference>
<dbReference type="InterPro" id="IPR001261">
    <property type="entry name" value="ArgE/DapE_CS"/>
</dbReference>
<dbReference type="InterPro" id="IPR036264">
    <property type="entry name" value="Bact_exopeptidase_dim_dom"/>
</dbReference>
<dbReference type="InterPro" id="IPR005941">
    <property type="entry name" value="DapE_proteobac"/>
</dbReference>
<dbReference type="InterPro" id="IPR002933">
    <property type="entry name" value="Peptidase_M20"/>
</dbReference>
<dbReference type="InterPro" id="IPR011650">
    <property type="entry name" value="Peptidase_M20_dimer"/>
</dbReference>
<dbReference type="InterPro" id="IPR050072">
    <property type="entry name" value="Peptidase_M20A"/>
</dbReference>
<dbReference type="NCBIfam" id="TIGR01246">
    <property type="entry name" value="dapE_proteo"/>
    <property type="match status" value="1"/>
</dbReference>
<dbReference type="NCBIfam" id="NF009557">
    <property type="entry name" value="PRK13009.1"/>
    <property type="match status" value="1"/>
</dbReference>
<dbReference type="PANTHER" id="PTHR43808">
    <property type="entry name" value="ACETYLORNITHINE DEACETYLASE"/>
    <property type="match status" value="1"/>
</dbReference>
<dbReference type="PANTHER" id="PTHR43808:SF31">
    <property type="entry name" value="N-ACETYL-L-CITRULLINE DEACETYLASE"/>
    <property type="match status" value="1"/>
</dbReference>
<dbReference type="Pfam" id="PF07687">
    <property type="entry name" value="M20_dimer"/>
    <property type="match status" value="1"/>
</dbReference>
<dbReference type="Pfam" id="PF01546">
    <property type="entry name" value="Peptidase_M20"/>
    <property type="match status" value="1"/>
</dbReference>
<dbReference type="SUPFAM" id="SSF55031">
    <property type="entry name" value="Bacterial exopeptidase dimerisation domain"/>
    <property type="match status" value="1"/>
</dbReference>
<dbReference type="SUPFAM" id="SSF53187">
    <property type="entry name" value="Zn-dependent exopeptidases"/>
    <property type="match status" value="1"/>
</dbReference>
<dbReference type="PROSITE" id="PS00758">
    <property type="entry name" value="ARGE_DAPE_CPG2_1"/>
    <property type="match status" value="1"/>
</dbReference>
<dbReference type="PROSITE" id="PS00759">
    <property type="entry name" value="ARGE_DAPE_CPG2_2"/>
    <property type="match status" value="1"/>
</dbReference>
<protein>
    <recommendedName>
        <fullName evidence="1">Succinyl-diaminopimelate desuccinylase</fullName>
        <shortName evidence="1">SDAP desuccinylase</shortName>
        <ecNumber evidence="1">3.5.1.18</ecNumber>
    </recommendedName>
    <alternativeName>
        <fullName evidence="1">N-succinyl-LL-2,6-diaminoheptanedioate amidohydrolase</fullName>
    </alternativeName>
</protein>
<comment type="function">
    <text evidence="1">Catalyzes the hydrolysis of N-succinyl-L,L-diaminopimelic acid (SDAP), forming succinate and LL-2,6-diaminopimelate (DAP), an intermediate involved in the bacterial biosynthesis of lysine and meso-diaminopimelic acid, an essential component of bacterial cell walls.</text>
</comment>
<comment type="catalytic activity">
    <reaction evidence="1">
        <text>N-succinyl-(2S,6S)-2,6-diaminopimelate + H2O = (2S,6S)-2,6-diaminopimelate + succinate</text>
        <dbReference type="Rhea" id="RHEA:22608"/>
        <dbReference type="ChEBI" id="CHEBI:15377"/>
        <dbReference type="ChEBI" id="CHEBI:30031"/>
        <dbReference type="ChEBI" id="CHEBI:57609"/>
        <dbReference type="ChEBI" id="CHEBI:58087"/>
        <dbReference type="EC" id="3.5.1.18"/>
    </reaction>
</comment>
<comment type="cofactor">
    <cofactor evidence="1">
        <name>Zn(2+)</name>
        <dbReference type="ChEBI" id="CHEBI:29105"/>
    </cofactor>
    <cofactor evidence="1">
        <name>Co(2+)</name>
        <dbReference type="ChEBI" id="CHEBI:48828"/>
    </cofactor>
    <text evidence="1">Binds 2 Zn(2+) or Co(2+) ions per subunit.</text>
</comment>
<comment type="pathway">
    <text evidence="1">Amino-acid biosynthesis; L-lysine biosynthesis via DAP pathway; LL-2,6-diaminopimelate from (S)-tetrahydrodipicolinate (succinylase route): step 3/3.</text>
</comment>
<comment type="subunit">
    <text evidence="1">Homodimer.</text>
</comment>
<comment type="similarity">
    <text evidence="1">Belongs to the peptidase M20A family. DapE subfamily.</text>
</comment>